<reference key="1">
    <citation type="journal article" date="1996" name="J. Biol. Chem.">
        <title>Molecular characterization of human zyxin.</title>
        <authorList>
            <person name="Macalma T."/>
            <person name="Otte J."/>
            <person name="Hensler M.E."/>
            <person name="Bockholt S.M."/>
            <person name="Louis H.A."/>
            <person name="Kalff-Suske M."/>
            <person name="Grzeschik K.H."/>
            <person name="von der Ahe D."/>
            <person name="Beckerle M.C."/>
        </authorList>
    </citation>
    <scope>NUCLEOTIDE SEQUENCE [MRNA] (ISOFORM 1)</scope>
    <source>
        <tissue>Umbilical vein</tissue>
    </source>
</reference>
<reference key="2">
    <citation type="journal article" date="1996" name="Eur. J. Biochem.">
        <title>A zyxin-related protein whose synthesis is reduced in virally transformed fibroblasts.</title>
        <authorList>
            <person name="Zumbrunn J."/>
            <person name="Trueb B."/>
        </authorList>
    </citation>
    <scope>NUCLEOTIDE SEQUENCE [MRNA] (ISOFORM 1)</scope>
    <source>
        <tissue>Placenta</tissue>
    </source>
</reference>
<reference key="3">
    <citation type="journal article" date="2004" name="Nat. Genet.">
        <title>Complete sequencing and characterization of 21,243 full-length human cDNAs.</title>
        <authorList>
            <person name="Ota T."/>
            <person name="Suzuki Y."/>
            <person name="Nishikawa T."/>
            <person name="Otsuki T."/>
            <person name="Sugiyama T."/>
            <person name="Irie R."/>
            <person name="Wakamatsu A."/>
            <person name="Hayashi K."/>
            <person name="Sato H."/>
            <person name="Nagai K."/>
            <person name="Kimura K."/>
            <person name="Makita H."/>
            <person name="Sekine M."/>
            <person name="Obayashi M."/>
            <person name="Nishi T."/>
            <person name="Shibahara T."/>
            <person name="Tanaka T."/>
            <person name="Ishii S."/>
            <person name="Yamamoto J."/>
            <person name="Saito K."/>
            <person name="Kawai Y."/>
            <person name="Isono Y."/>
            <person name="Nakamura Y."/>
            <person name="Nagahari K."/>
            <person name="Murakami K."/>
            <person name="Yasuda T."/>
            <person name="Iwayanagi T."/>
            <person name="Wagatsuma M."/>
            <person name="Shiratori A."/>
            <person name="Sudo H."/>
            <person name="Hosoiri T."/>
            <person name="Kaku Y."/>
            <person name="Kodaira H."/>
            <person name="Kondo H."/>
            <person name="Sugawara M."/>
            <person name="Takahashi M."/>
            <person name="Kanda K."/>
            <person name="Yokoi T."/>
            <person name="Furuya T."/>
            <person name="Kikkawa E."/>
            <person name="Omura Y."/>
            <person name="Abe K."/>
            <person name="Kamihara K."/>
            <person name="Katsuta N."/>
            <person name="Sato K."/>
            <person name="Tanikawa M."/>
            <person name="Yamazaki M."/>
            <person name="Ninomiya K."/>
            <person name="Ishibashi T."/>
            <person name="Yamashita H."/>
            <person name="Murakawa K."/>
            <person name="Fujimori K."/>
            <person name="Tanai H."/>
            <person name="Kimata M."/>
            <person name="Watanabe M."/>
            <person name="Hiraoka S."/>
            <person name="Chiba Y."/>
            <person name="Ishida S."/>
            <person name="Ono Y."/>
            <person name="Takiguchi S."/>
            <person name="Watanabe S."/>
            <person name="Yosida M."/>
            <person name="Hotuta T."/>
            <person name="Kusano J."/>
            <person name="Kanehori K."/>
            <person name="Takahashi-Fujii A."/>
            <person name="Hara H."/>
            <person name="Tanase T.-O."/>
            <person name="Nomura Y."/>
            <person name="Togiya S."/>
            <person name="Komai F."/>
            <person name="Hara R."/>
            <person name="Takeuchi K."/>
            <person name="Arita M."/>
            <person name="Imose N."/>
            <person name="Musashino K."/>
            <person name="Yuuki H."/>
            <person name="Oshima A."/>
            <person name="Sasaki N."/>
            <person name="Aotsuka S."/>
            <person name="Yoshikawa Y."/>
            <person name="Matsunawa H."/>
            <person name="Ichihara T."/>
            <person name="Shiohata N."/>
            <person name="Sano S."/>
            <person name="Moriya S."/>
            <person name="Momiyama H."/>
            <person name="Satoh N."/>
            <person name="Takami S."/>
            <person name="Terashima Y."/>
            <person name="Suzuki O."/>
            <person name="Nakagawa S."/>
            <person name="Senoh A."/>
            <person name="Mizoguchi H."/>
            <person name="Goto Y."/>
            <person name="Shimizu F."/>
            <person name="Wakebe H."/>
            <person name="Hishigaki H."/>
            <person name="Watanabe T."/>
            <person name="Sugiyama A."/>
            <person name="Takemoto M."/>
            <person name="Kawakami B."/>
            <person name="Yamazaki M."/>
            <person name="Watanabe K."/>
            <person name="Kumagai A."/>
            <person name="Itakura S."/>
            <person name="Fukuzumi Y."/>
            <person name="Fujimori Y."/>
            <person name="Komiyama M."/>
            <person name="Tashiro H."/>
            <person name="Tanigami A."/>
            <person name="Fujiwara T."/>
            <person name="Ono T."/>
            <person name="Yamada K."/>
            <person name="Fujii Y."/>
            <person name="Ozaki K."/>
            <person name="Hirao M."/>
            <person name="Ohmori Y."/>
            <person name="Kawabata A."/>
            <person name="Hikiji T."/>
            <person name="Kobatake N."/>
            <person name="Inagaki H."/>
            <person name="Ikema Y."/>
            <person name="Okamoto S."/>
            <person name="Okitani R."/>
            <person name="Kawakami T."/>
            <person name="Noguchi S."/>
            <person name="Itoh T."/>
            <person name="Shigeta K."/>
            <person name="Senba T."/>
            <person name="Matsumura K."/>
            <person name="Nakajima Y."/>
            <person name="Mizuno T."/>
            <person name="Morinaga M."/>
            <person name="Sasaki M."/>
            <person name="Togashi T."/>
            <person name="Oyama M."/>
            <person name="Hata H."/>
            <person name="Watanabe M."/>
            <person name="Komatsu T."/>
            <person name="Mizushima-Sugano J."/>
            <person name="Satoh T."/>
            <person name="Shirai Y."/>
            <person name="Takahashi Y."/>
            <person name="Nakagawa K."/>
            <person name="Okumura K."/>
            <person name="Nagase T."/>
            <person name="Nomura N."/>
            <person name="Kikuchi H."/>
            <person name="Masuho Y."/>
            <person name="Yamashita R."/>
            <person name="Nakai K."/>
            <person name="Yada T."/>
            <person name="Nakamura Y."/>
            <person name="Ohara O."/>
            <person name="Isogai T."/>
            <person name="Sugano S."/>
        </authorList>
    </citation>
    <scope>NUCLEOTIDE SEQUENCE [LARGE SCALE MRNA] (ISOFORM 2)</scope>
</reference>
<reference key="4">
    <citation type="submission" date="2004-06" db="EMBL/GenBank/DDBJ databases">
        <title>Cloning of human full open reading frames in Gateway(TM) system entry vector (pDONR201).</title>
        <authorList>
            <person name="Ebert L."/>
            <person name="Schick M."/>
            <person name="Neubert P."/>
            <person name="Schatten R."/>
            <person name="Henze S."/>
            <person name="Korn B."/>
        </authorList>
    </citation>
    <scope>NUCLEOTIDE SEQUENCE [LARGE SCALE MRNA] (ISOFORM 1)</scope>
</reference>
<reference key="5">
    <citation type="journal article" date="2003" name="Nature">
        <title>The DNA sequence of human chromosome 7.</title>
        <authorList>
            <person name="Hillier L.W."/>
            <person name="Fulton R.S."/>
            <person name="Fulton L.A."/>
            <person name="Graves T.A."/>
            <person name="Pepin K.H."/>
            <person name="Wagner-McPherson C."/>
            <person name="Layman D."/>
            <person name="Maas J."/>
            <person name="Jaeger S."/>
            <person name="Walker R."/>
            <person name="Wylie K."/>
            <person name="Sekhon M."/>
            <person name="Becker M.C."/>
            <person name="O'Laughlin M.D."/>
            <person name="Schaller M.E."/>
            <person name="Fewell G.A."/>
            <person name="Delehaunty K.D."/>
            <person name="Miner T.L."/>
            <person name="Nash W.E."/>
            <person name="Cordes M."/>
            <person name="Du H."/>
            <person name="Sun H."/>
            <person name="Edwards J."/>
            <person name="Bradshaw-Cordum H."/>
            <person name="Ali J."/>
            <person name="Andrews S."/>
            <person name="Isak A."/>
            <person name="Vanbrunt A."/>
            <person name="Nguyen C."/>
            <person name="Du F."/>
            <person name="Lamar B."/>
            <person name="Courtney L."/>
            <person name="Kalicki J."/>
            <person name="Ozersky P."/>
            <person name="Bielicki L."/>
            <person name="Scott K."/>
            <person name="Holmes A."/>
            <person name="Harkins R."/>
            <person name="Harris A."/>
            <person name="Strong C.M."/>
            <person name="Hou S."/>
            <person name="Tomlinson C."/>
            <person name="Dauphin-Kohlberg S."/>
            <person name="Kozlowicz-Reilly A."/>
            <person name="Leonard S."/>
            <person name="Rohlfing T."/>
            <person name="Rock S.M."/>
            <person name="Tin-Wollam A.-M."/>
            <person name="Abbott A."/>
            <person name="Minx P."/>
            <person name="Maupin R."/>
            <person name="Strowmatt C."/>
            <person name="Latreille P."/>
            <person name="Miller N."/>
            <person name="Johnson D."/>
            <person name="Murray J."/>
            <person name="Woessner J.P."/>
            <person name="Wendl M.C."/>
            <person name="Yang S.-P."/>
            <person name="Schultz B.R."/>
            <person name="Wallis J.W."/>
            <person name="Spieth J."/>
            <person name="Bieri T.A."/>
            <person name="Nelson J.O."/>
            <person name="Berkowicz N."/>
            <person name="Wohldmann P.E."/>
            <person name="Cook L.L."/>
            <person name="Hickenbotham M.T."/>
            <person name="Eldred J."/>
            <person name="Williams D."/>
            <person name="Bedell J.A."/>
            <person name="Mardis E.R."/>
            <person name="Clifton S.W."/>
            <person name="Chissoe S.L."/>
            <person name="Marra M.A."/>
            <person name="Raymond C."/>
            <person name="Haugen E."/>
            <person name="Gillett W."/>
            <person name="Zhou Y."/>
            <person name="James R."/>
            <person name="Phelps K."/>
            <person name="Iadanoto S."/>
            <person name="Bubb K."/>
            <person name="Simms E."/>
            <person name="Levy R."/>
            <person name="Clendenning J."/>
            <person name="Kaul R."/>
            <person name="Kent W.J."/>
            <person name="Furey T.S."/>
            <person name="Baertsch R.A."/>
            <person name="Brent M.R."/>
            <person name="Keibler E."/>
            <person name="Flicek P."/>
            <person name="Bork P."/>
            <person name="Suyama M."/>
            <person name="Bailey J.A."/>
            <person name="Portnoy M.E."/>
            <person name="Torrents D."/>
            <person name="Chinwalla A.T."/>
            <person name="Gish W.R."/>
            <person name="Eddy S.R."/>
            <person name="McPherson J.D."/>
            <person name="Olson M.V."/>
            <person name="Eichler E.E."/>
            <person name="Green E.D."/>
            <person name="Waterston R.H."/>
            <person name="Wilson R.K."/>
        </authorList>
    </citation>
    <scope>NUCLEOTIDE SEQUENCE [LARGE SCALE GENOMIC DNA]</scope>
</reference>
<reference key="6">
    <citation type="journal article" date="2003" name="Science">
        <title>Human chromosome 7: DNA sequence and biology.</title>
        <authorList>
            <person name="Scherer S.W."/>
            <person name="Cheung J."/>
            <person name="MacDonald J.R."/>
            <person name="Osborne L.R."/>
            <person name="Nakabayashi K."/>
            <person name="Herbrick J.-A."/>
            <person name="Carson A.R."/>
            <person name="Parker-Katiraee L."/>
            <person name="Skaug J."/>
            <person name="Khaja R."/>
            <person name="Zhang J."/>
            <person name="Hudek A.K."/>
            <person name="Li M."/>
            <person name="Haddad M."/>
            <person name="Duggan G.E."/>
            <person name="Fernandez B.A."/>
            <person name="Kanematsu E."/>
            <person name="Gentles S."/>
            <person name="Christopoulos C.C."/>
            <person name="Choufani S."/>
            <person name="Kwasnicka D."/>
            <person name="Zheng X.H."/>
            <person name="Lai Z."/>
            <person name="Nusskern D.R."/>
            <person name="Zhang Q."/>
            <person name="Gu Z."/>
            <person name="Lu F."/>
            <person name="Zeesman S."/>
            <person name="Nowaczyk M.J."/>
            <person name="Teshima I."/>
            <person name="Chitayat D."/>
            <person name="Shuman C."/>
            <person name="Weksberg R."/>
            <person name="Zackai E.H."/>
            <person name="Grebe T.A."/>
            <person name="Cox S.R."/>
            <person name="Kirkpatrick S.J."/>
            <person name="Rahman N."/>
            <person name="Friedman J.M."/>
            <person name="Heng H.H.Q."/>
            <person name="Pelicci P.G."/>
            <person name="Lo-Coco F."/>
            <person name="Belloni E."/>
            <person name="Shaffer L.G."/>
            <person name="Pober B."/>
            <person name="Morton C.C."/>
            <person name="Gusella J.F."/>
            <person name="Bruns G.A.P."/>
            <person name="Korf B.R."/>
            <person name="Quade B.J."/>
            <person name="Ligon A.H."/>
            <person name="Ferguson H."/>
            <person name="Higgins A.W."/>
            <person name="Leach N.T."/>
            <person name="Herrick S.R."/>
            <person name="Lemyre E."/>
            <person name="Farra C.G."/>
            <person name="Kim H.-G."/>
            <person name="Summers A.M."/>
            <person name="Gripp K.W."/>
            <person name="Roberts W."/>
            <person name="Szatmari P."/>
            <person name="Winsor E.J.T."/>
            <person name="Grzeschik K.-H."/>
            <person name="Teebi A."/>
            <person name="Minassian B.A."/>
            <person name="Kere J."/>
            <person name="Armengol L."/>
            <person name="Pujana M.A."/>
            <person name="Estivill X."/>
            <person name="Wilson M.D."/>
            <person name="Koop B.F."/>
            <person name="Tosi S."/>
            <person name="Moore G.E."/>
            <person name="Boright A.P."/>
            <person name="Zlotorynski E."/>
            <person name="Kerem B."/>
            <person name="Kroisel P.M."/>
            <person name="Petek E."/>
            <person name="Oscier D.G."/>
            <person name="Mould S.J."/>
            <person name="Doehner H."/>
            <person name="Doehner K."/>
            <person name="Rommens J.M."/>
            <person name="Vincent J.B."/>
            <person name="Venter J.C."/>
            <person name="Li P.W."/>
            <person name="Mural R.J."/>
            <person name="Adams M.D."/>
            <person name="Tsui L.-C."/>
        </authorList>
    </citation>
    <scope>NUCLEOTIDE SEQUENCE [LARGE SCALE GENOMIC DNA]</scope>
</reference>
<reference key="7">
    <citation type="submission" date="2005-09" db="EMBL/GenBank/DDBJ databases">
        <authorList>
            <person name="Mural R.J."/>
            <person name="Istrail S."/>
            <person name="Sutton G."/>
            <person name="Florea L."/>
            <person name="Halpern A.L."/>
            <person name="Mobarry C.M."/>
            <person name="Lippert R."/>
            <person name="Walenz B."/>
            <person name="Shatkay H."/>
            <person name="Dew I."/>
            <person name="Miller J.R."/>
            <person name="Flanigan M.J."/>
            <person name="Edwards N.J."/>
            <person name="Bolanos R."/>
            <person name="Fasulo D."/>
            <person name="Halldorsson B.V."/>
            <person name="Hannenhalli S."/>
            <person name="Turner R."/>
            <person name="Yooseph S."/>
            <person name="Lu F."/>
            <person name="Nusskern D.R."/>
            <person name="Shue B.C."/>
            <person name="Zheng X.H."/>
            <person name="Zhong F."/>
            <person name="Delcher A.L."/>
            <person name="Huson D.H."/>
            <person name="Kravitz S.A."/>
            <person name="Mouchard L."/>
            <person name="Reinert K."/>
            <person name="Remington K.A."/>
            <person name="Clark A.G."/>
            <person name="Waterman M.S."/>
            <person name="Eichler E.E."/>
            <person name="Adams M.D."/>
            <person name="Hunkapiller M.W."/>
            <person name="Myers E.W."/>
            <person name="Venter J.C."/>
        </authorList>
    </citation>
    <scope>NUCLEOTIDE SEQUENCE [LARGE SCALE GENOMIC DNA]</scope>
</reference>
<reference key="8">
    <citation type="journal article" date="2004" name="Genome Res.">
        <title>The status, quality, and expansion of the NIH full-length cDNA project: the Mammalian Gene Collection (MGC).</title>
        <authorList>
            <consortium name="The MGC Project Team"/>
        </authorList>
    </citation>
    <scope>NUCLEOTIDE SEQUENCE [LARGE SCALE MRNA] (ISOFORM 1)</scope>
    <source>
        <tissue>Kidney</tissue>
        <tissue>Skin</tissue>
        <tissue>Uterus</tissue>
    </source>
</reference>
<reference key="9">
    <citation type="submission" date="2008-02" db="UniProtKB">
        <authorList>
            <person name="Bienvenut W.V."/>
            <person name="Calvo F."/>
        </authorList>
    </citation>
    <scope>PROTEIN SEQUENCE OF 2-25; 36-54; 168-184; 280-320 AND 325-375</scope>
    <scope>CLEAVAGE OF INITIATOR METHIONINE</scope>
    <scope>ACETYLATION AT ALA-2</scope>
    <scope>IDENTIFICATION BY MASS SPECTROMETRY</scope>
    <source>
        <tissue>Cervix carcinoma</tissue>
    </source>
</reference>
<reference key="10">
    <citation type="journal article" date="2000" name="J. Biol. Chem.">
        <title>Characterization of the interaction between zyxin and members of the Ena/vasodilator-stimulated phosphoprotein family of proteins.</title>
        <authorList>
            <person name="Drees B."/>
            <person name="Friederich E."/>
            <person name="Fradelizi J."/>
            <person name="Louvard D."/>
            <person name="Beckerle M.C."/>
            <person name="Golsteyn R.M."/>
        </authorList>
    </citation>
    <scope>INTERACTION WITH ENAH AND VASP</scope>
    <scope>MUTAGENESIS OF PHE-71; PHE-93; PHE-104 AND PHE-114</scope>
</reference>
<reference key="11">
    <citation type="journal article" date="2001" name="J. Virol.">
        <title>Interaction of zyxin, a focal adhesion protein, with the E6 protein from human papillomavirus type 6 results in its nuclear translocation.</title>
        <authorList>
            <person name="Degenhardt Y.Y."/>
            <person name="Silverstein S."/>
        </authorList>
    </citation>
    <scope>INTERACTION WITH HPV6 E6 (MICROBIAL INFECTION)</scope>
</reference>
<reference key="12">
    <citation type="journal article" date="2003" name="J. Cell Biol.">
        <title>The conformational state of Tes regulates its zyxin-dependent recruitment to focal adhesions.</title>
        <authorList>
            <person name="Garvalov B.K."/>
            <person name="Higgins T.E."/>
            <person name="Sutherland J.D."/>
            <person name="Zettl M."/>
            <person name="Scaplehorn N."/>
            <person name="Koecher T."/>
            <person name="Piddini E."/>
            <person name="Griffiths G."/>
            <person name="Way M."/>
        </authorList>
    </citation>
    <scope>SUBCELLULAR LOCATION</scope>
    <scope>INTERACTION WITH TES</scope>
</reference>
<reference key="13">
    <citation type="journal article" date="2006" name="Cancer Res.">
        <title>Myopodin-mediated suppression of prostate cancer cell migration involves interaction with zyxin.</title>
        <authorList>
            <person name="Yu Y.P."/>
            <person name="Luo J.H."/>
        </authorList>
    </citation>
    <scope>INTERACTION WITH SYNPO2</scope>
</reference>
<reference key="14">
    <citation type="journal article" date="2006" name="Cell">
        <title>Global, in vivo, and site-specific phosphorylation dynamics in signaling networks.</title>
        <authorList>
            <person name="Olsen J.V."/>
            <person name="Blagoev B."/>
            <person name="Gnad F."/>
            <person name="Macek B."/>
            <person name="Kumar C."/>
            <person name="Mortensen P."/>
            <person name="Mann M."/>
        </authorList>
    </citation>
    <scope>PHOSPHORYLATION [LARGE SCALE ANALYSIS] AT SER-344</scope>
    <scope>IDENTIFICATION BY MASS SPECTROMETRY [LARGE SCALE ANALYSIS]</scope>
    <source>
        <tissue>Cervix carcinoma</tissue>
    </source>
</reference>
<reference key="15">
    <citation type="journal article" date="2006" name="Nat. Biotechnol.">
        <title>A probability-based approach for high-throughput protein phosphorylation analysis and site localization.</title>
        <authorList>
            <person name="Beausoleil S.A."/>
            <person name="Villen J."/>
            <person name="Gerber S.A."/>
            <person name="Rush J."/>
            <person name="Gygi S.P."/>
        </authorList>
    </citation>
    <scope>PHOSPHORYLATION [LARGE SCALE ANALYSIS] AT SER-259 AND SER-281</scope>
    <scope>IDENTIFICATION BY MASS SPECTROMETRY [LARGE SCALE ANALYSIS]</scope>
    <source>
        <tissue>Cervix carcinoma</tissue>
    </source>
</reference>
<reference key="16">
    <citation type="journal article" date="2007" name="J. Proteome Res.">
        <title>Improved titanium dioxide enrichment of phosphopeptides from HeLa cells and high confident phosphopeptide identification by cross-validation of MS/MS and MS/MS/MS spectra.</title>
        <authorList>
            <person name="Yu L.R."/>
            <person name="Zhu Z."/>
            <person name="Chan K.C."/>
            <person name="Issaq H.J."/>
            <person name="Dimitrov D.S."/>
            <person name="Veenstra T.D."/>
        </authorList>
    </citation>
    <scope>IDENTIFICATION BY MASS SPECTROMETRY [LARGE SCALE ANALYSIS]</scope>
    <source>
        <tissue>Cervix carcinoma</tissue>
    </source>
</reference>
<reference key="17">
    <citation type="journal article" date="2007" name="Mol. Cell">
        <title>Tes, a specific Mena interacting partner, breaks the rules for EVH1 binding.</title>
        <authorList>
            <person name="Boeda B."/>
            <person name="Briggs D.C."/>
            <person name="Higgins T."/>
            <person name="Garvalov B.K."/>
            <person name="Fadden A.J."/>
            <person name="McDonald N.Q."/>
            <person name="Way M."/>
        </authorList>
    </citation>
    <scope>INTERACTION WITH EVL; VASP AND ENAH</scope>
</reference>
<reference key="18">
    <citation type="journal article" date="2008" name="Dev. Dyn.">
        <title>The LIM-domain protein zyxin binds the homeodomain factor Xanf1/Hesx1 and modulates its activity in the anterior neural plate of Xenopus laevis embryo.</title>
        <authorList>
            <person name="Martynova N.Y."/>
            <person name="Eroshkin F.M."/>
            <person name="Ermolina L.V."/>
            <person name="Ermakova G.V."/>
            <person name="Korotaeva A.L."/>
            <person name="Smurova K.M."/>
            <person name="Gyoeva F.K."/>
            <person name="Zaraisky A.G."/>
        </authorList>
    </citation>
    <scope>SUBCELLULAR LOCATION</scope>
</reference>
<reference key="19">
    <citation type="journal article" date="2008" name="J. Proteome Res.">
        <title>Combining protein-based IMAC, peptide-based IMAC, and MudPIT for efficient phosphoproteomic analysis.</title>
        <authorList>
            <person name="Cantin G.T."/>
            <person name="Yi W."/>
            <person name="Lu B."/>
            <person name="Park S.K."/>
            <person name="Xu T."/>
            <person name="Lee J.-D."/>
            <person name="Yates J.R. III"/>
        </authorList>
    </citation>
    <scope>IDENTIFICATION BY MASS SPECTROMETRY [LARGE SCALE ANALYSIS]</scope>
    <source>
        <tissue>Cervix carcinoma</tissue>
    </source>
</reference>
<reference key="20">
    <citation type="journal article" date="2008" name="J. Proteome Res.">
        <title>Phosphoproteome of resting human platelets.</title>
        <authorList>
            <person name="Zahedi R.P."/>
            <person name="Lewandrowski U."/>
            <person name="Wiesner J."/>
            <person name="Wortelkamp S."/>
            <person name="Moebius J."/>
            <person name="Schuetz C."/>
            <person name="Walter U."/>
            <person name="Gambaryan S."/>
            <person name="Sickmann A."/>
        </authorList>
    </citation>
    <scope>PHOSPHORYLATION [LARGE SCALE ANALYSIS] AT SER-267; SER-281 AND SER-344</scope>
    <scope>IDENTIFICATION BY MASS SPECTROMETRY [LARGE SCALE ANALYSIS]</scope>
    <source>
        <tissue>Platelet</tissue>
    </source>
</reference>
<reference key="21">
    <citation type="journal article" date="2008" name="Proc. Natl. Acad. Sci. U.S.A.">
        <title>A quantitative atlas of mitotic phosphorylation.</title>
        <authorList>
            <person name="Dephoure N."/>
            <person name="Zhou C."/>
            <person name="Villen J."/>
            <person name="Beausoleil S.A."/>
            <person name="Bakalarski C.E."/>
            <person name="Elledge S.J."/>
            <person name="Gygi S.P."/>
        </authorList>
    </citation>
    <scope>PHOSPHORYLATION [LARGE SCALE ANALYSIS] AT SER-169; SER-259; SER-267; THR-270; THR-274; SER-281; SER-288; SER-308 AND SER-344</scope>
    <scope>IDENTIFICATION BY MASS SPECTROMETRY [LARGE SCALE ANALYSIS]</scope>
    <source>
        <tissue>Cervix carcinoma</tissue>
    </source>
</reference>
<reference key="22">
    <citation type="journal article" date="2009" name="Anal. Chem.">
        <title>Lys-N and trypsin cover complementary parts of the phosphoproteome in a refined SCX-based approach.</title>
        <authorList>
            <person name="Gauci S."/>
            <person name="Helbig A.O."/>
            <person name="Slijper M."/>
            <person name="Krijgsveld J."/>
            <person name="Heck A.J."/>
            <person name="Mohammed S."/>
        </authorList>
    </citation>
    <scope>ACETYLATION [LARGE SCALE ANALYSIS] AT ALA-2</scope>
    <scope>CLEAVAGE OF INITIATOR METHIONINE [LARGE SCALE ANALYSIS]</scope>
    <scope>IDENTIFICATION BY MASS SPECTROMETRY [LARGE SCALE ANALYSIS]</scope>
</reference>
<reference key="23">
    <citation type="journal article" date="2009" name="Sci. Signal.">
        <title>Quantitative phosphoproteomic analysis of T cell receptor signaling reveals system-wide modulation of protein-protein interactions.</title>
        <authorList>
            <person name="Mayya V."/>
            <person name="Lundgren D.H."/>
            <person name="Hwang S.-I."/>
            <person name="Rezaul K."/>
            <person name="Wu L."/>
            <person name="Eng J.K."/>
            <person name="Rodionov V."/>
            <person name="Han D.K."/>
        </authorList>
    </citation>
    <scope>IDENTIFICATION BY MASS SPECTROMETRY [LARGE SCALE ANALYSIS]</scope>
    <source>
        <tissue>Leukemic T-cell</tissue>
    </source>
</reference>
<reference key="24">
    <citation type="journal article" date="2009" name="Science">
        <title>Lysine acetylation targets protein complexes and co-regulates major cellular functions.</title>
        <authorList>
            <person name="Choudhary C."/>
            <person name="Kumar C."/>
            <person name="Gnad F."/>
            <person name="Nielsen M.L."/>
            <person name="Rehman M."/>
            <person name="Walther T.C."/>
            <person name="Olsen J.V."/>
            <person name="Mann M."/>
        </authorList>
    </citation>
    <scope>ACETYLATION [LARGE SCALE ANALYSIS] AT LYS-279</scope>
    <scope>IDENTIFICATION BY MASS SPECTROMETRY [LARGE SCALE ANALYSIS]</scope>
</reference>
<reference key="25">
    <citation type="journal article" date="2010" name="Sci. Signal.">
        <title>Quantitative phosphoproteomics reveals widespread full phosphorylation site occupancy during mitosis.</title>
        <authorList>
            <person name="Olsen J.V."/>
            <person name="Vermeulen M."/>
            <person name="Santamaria A."/>
            <person name="Kumar C."/>
            <person name="Miller M.L."/>
            <person name="Jensen L.J."/>
            <person name="Gnad F."/>
            <person name="Cox J."/>
            <person name="Jensen T.S."/>
            <person name="Nigg E.A."/>
            <person name="Brunak S."/>
            <person name="Mann M."/>
        </authorList>
    </citation>
    <scope>PHOSPHORYLATION [LARGE SCALE ANALYSIS] AT SER-169; THR-179; SER-259; THR-274; SER-281; SER-308 AND SER-344</scope>
    <scope>IDENTIFICATION BY MASS SPECTROMETRY [LARGE SCALE ANALYSIS]</scope>
    <source>
        <tissue>Cervix carcinoma</tissue>
    </source>
</reference>
<reference key="26">
    <citation type="journal article" date="2011" name="BMC Syst. Biol.">
        <title>Initial characterization of the human central proteome.</title>
        <authorList>
            <person name="Burkard T.R."/>
            <person name="Planyavsky M."/>
            <person name="Kaupe I."/>
            <person name="Breitwieser F.P."/>
            <person name="Buerckstuemmer T."/>
            <person name="Bennett K.L."/>
            <person name="Superti-Furga G."/>
            <person name="Colinge J."/>
        </authorList>
    </citation>
    <scope>IDENTIFICATION BY MASS SPECTROMETRY [LARGE SCALE ANALYSIS]</scope>
</reference>
<reference key="27">
    <citation type="journal article" date="2011" name="Sci. Signal.">
        <title>System-wide temporal characterization of the proteome and phosphoproteome of human embryonic stem cell differentiation.</title>
        <authorList>
            <person name="Rigbolt K.T."/>
            <person name="Prokhorova T.A."/>
            <person name="Akimov V."/>
            <person name="Henningsen J."/>
            <person name="Johansen P.T."/>
            <person name="Kratchmarova I."/>
            <person name="Kassem M."/>
            <person name="Mann M."/>
            <person name="Olsen J.V."/>
            <person name="Blagoev B."/>
        </authorList>
    </citation>
    <scope>PHOSPHORYLATION [LARGE SCALE ANALYSIS] AT SER-267; THR-270; SER-281 AND SER-344</scope>
    <scope>IDENTIFICATION BY MASS SPECTROMETRY [LARGE SCALE ANALYSIS]</scope>
</reference>
<reference key="28">
    <citation type="journal article" date="2012" name="Proc. Natl. Acad. Sci. U.S.A.">
        <title>N-terminal acetylome analyses and functional insights of the N-terminal acetyltransferase NatB.</title>
        <authorList>
            <person name="Van Damme P."/>
            <person name="Lasa M."/>
            <person name="Polevoda B."/>
            <person name="Gazquez C."/>
            <person name="Elosegui-Artola A."/>
            <person name="Kim D.S."/>
            <person name="De Juan-Pardo E."/>
            <person name="Demeyer K."/>
            <person name="Hole K."/>
            <person name="Larrea E."/>
            <person name="Timmerman E."/>
            <person name="Prieto J."/>
            <person name="Arnesen T."/>
            <person name="Sherman F."/>
            <person name="Gevaert K."/>
            <person name="Aldabe R."/>
        </authorList>
    </citation>
    <scope>IDENTIFICATION BY MASS SPECTROMETRY [LARGE SCALE ANALYSIS]</scope>
</reference>
<reference key="29">
    <citation type="journal article" date="2013" name="J. Proteome Res.">
        <title>Toward a comprehensive characterization of a human cancer cell phosphoproteome.</title>
        <authorList>
            <person name="Zhou H."/>
            <person name="Di Palma S."/>
            <person name="Preisinger C."/>
            <person name="Peng M."/>
            <person name="Polat A.N."/>
            <person name="Heck A.J."/>
            <person name="Mohammed S."/>
        </authorList>
    </citation>
    <scope>PHOSPHORYLATION [LARGE SCALE ANALYSIS] AT SER-169; SER-170; SER-259; SER-267; THR-270; SER-281; SER-308 AND SER-344</scope>
    <scope>IDENTIFICATION BY MASS SPECTROMETRY [LARGE SCALE ANALYSIS]</scope>
    <source>
        <tissue>Cervix carcinoma</tissue>
        <tissue>Erythroleukemia</tissue>
    </source>
</reference>
<reference key="30">
    <citation type="journal article" date="2014" name="J. Proteomics">
        <title>An enzyme assisted RP-RPLC approach for in-depth analysis of human liver phosphoproteome.</title>
        <authorList>
            <person name="Bian Y."/>
            <person name="Song C."/>
            <person name="Cheng K."/>
            <person name="Dong M."/>
            <person name="Wang F."/>
            <person name="Huang J."/>
            <person name="Sun D."/>
            <person name="Wang L."/>
            <person name="Ye M."/>
            <person name="Zou H."/>
        </authorList>
    </citation>
    <scope>PHOSPHORYLATION [LARGE SCALE ANALYSIS] AT SER-116; SER-142; SER-259; SER-267; SER-281 AND SER-344</scope>
    <scope>IDENTIFICATION BY MASS SPECTROMETRY [LARGE SCALE ANALYSIS]</scope>
    <source>
        <tissue>Liver</tissue>
    </source>
</reference>
<reference key="31">
    <citation type="journal article" date="2014" name="Mol. Cell. Proteomics">
        <title>Immunoaffinity enrichment and mass spectrometry analysis of protein methylation.</title>
        <authorList>
            <person name="Guo A."/>
            <person name="Gu H."/>
            <person name="Zhou J."/>
            <person name="Mulhern D."/>
            <person name="Wang Y."/>
            <person name="Lee K.A."/>
            <person name="Yang V."/>
            <person name="Aguiar M."/>
            <person name="Kornhauser J."/>
            <person name="Jia X."/>
            <person name="Ren J."/>
            <person name="Beausoleil S.A."/>
            <person name="Silva J.C."/>
            <person name="Vemulapalli V."/>
            <person name="Bedford M.T."/>
            <person name="Comb M.J."/>
        </authorList>
    </citation>
    <scope>IDENTIFICATION BY MASS SPECTROMETRY [LARGE SCALE ANALYSIS]</scope>
    <source>
        <tissue>Colon carcinoma</tissue>
    </source>
</reference>
<reference key="32">
    <citation type="journal article" date="2015" name="Proteomics">
        <title>N-terminome analysis of the human mitochondrial proteome.</title>
        <authorList>
            <person name="Vaca Jacome A.S."/>
            <person name="Rabilloud T."/>
            <person name="Schaeffer-Reiss C."/>
            <person name="Rompais M."/>
            <person name="Ayoub D."/>
            <person name="Lane L."/>
            <person name="Bairoch A."/>
            <person name="Van Dorsselaer A."/>
            <person name="Carapito C."/>
        </authorList>
    </citation>
    <scope>IDENTIFICATION BY MASS SPECTROMETRY [LARGE SCALE ANALYSIS]</scope>
</reference>
<feature type="initiator methionine" description="Removed" evidence="10 17">
    <location>
        <position position="1"/>
    </location>
</feature>
<feature type="chain" id="PRO_0000075913" description="Zyxin">
    <location>
        <begin position="2"/>
        <end position="572"/>
    </location>
</feature>
<feature type="domain" description="LIM zinc-binding 1" evidence="3">
    <location>
        <begin position="384"/>
        <end position="443"/>
    </location>
</feature>
<feature type="domain" description="LIM zinc-binding 2" evidence="3">
    <location>
        <begin position="444"/>
        <end position="503"/>
    </location>
</feature>
<feature type="domain" description="LIM zinc-binding 3" evidence="3">
    <location>
        <begin position="504"/>
        <end position="570"/>
    </location>
</feature>
<feature type="region of interest" description="Disordered" evidence="4">
    <location>
        <begin position="23"/>
        <end position="351"/>
    </location>
</feature>
<feature type="compositionally biased region" description="Pro residues" evidence="4">
    <location>
        <begin position="63"/>
        <end position="78"/>
    </location>
</feature>
<feature type="compositionally biased region" description="Pro residues" evidence="4">
    <location>
        <begin position="93"/>
        <end position="108"/>
    </location>
</feature>
<feature type="compositionally biased region" description="Low complexity" evidence="4">
    <location>
        <begin position="143"/>
        <end position="156"/>
    </location>
</feature>
<feature type="compositionally biased region" description="Low complexity" evidence="4">
    <location>
        <begin position="202"/>
        <end position="239"/>
    </location>
</feature>
<feature type="compositionally biased region" description="Polar residues" evidence="4">
    <location>
        <begin position="240"/>
        <end position="252"/>
    </location>
</feature>
<feature type="compositionally biased region" description="Pro residues" evidence="4">
    <location>
        <begin position="253"/>
        <end position="265"/>
    </location>
</feature>
<feature type="compositionally biased region" description="Polar residues" evidence="4">
    <location>
        <begin position="305"/>
        <end position="318"/>
    </location>
</feature>
<feature type="compositionally biased region" description="Basic and acidic residues" evidence="4">
    <location>
        <begin position="319"/>
        <end position="330"/>
    </location>
</feature>
<feature type="modified residue" description="N-acetylalanine" evidence="10 17">
    <location>
        <position position="2"/>
    </location>
</feature>
<feature type="modified residue" description="Phosphoserine" evidence="22">
    <location>
        <position position="116"/>
    </location>
</feature>
<feature type="modified residue" description="Phosphoserine" evidence="22">
    <location>
        <position position="142"/>
    </location>
</feature>
<feature type="modified residue" description="Phosphoserine" evidence="2">
    <location>
        <position position="143"/>
    </location>
</feature>
<feature type="modified residue" description="Phosphoserine" evidence="16 19 21">
    <location>
        <position position="169"/>
    </location>
</feature>
<feature type="modified residue" description="Phosphoserine" evidence="21">
    <location>
        <position position="170"/>
    </location>
</feature>
<feature type="modified residue" description="Phosphothreonine" evidence="19">
    <location>
        <position position="179"/>
    </location>
</feature>
<feature type="modified residue" description="Asymmetric dimethylarginine" evidence="2">
    <location>
        <position position="253"/>
    </location>
</feature>
<feature type="modified residue" description="Phosphoserine" evidence="13 16 19 21 22">
    <location>
        <position position="259"/>
    </location>
</feature>
<feature type="modified residue" description="N6-acetyllysine" evidence="2">
    <location>
        <position position="265"/>
    </location>
</feature>
<feature type="modified residue" description="Phosphoserine" evidence="15 16 20 21 22">
    <location>
        <position position="267"/>
    </location>
</feature>
<feature type="modified residue" description="Phosphothreonine" evidence="16 20 21">
    <location>
        <position position="270"/>
    </location>
</feature>
<feature type="modified residue" description="N6-acetyllysine" evidence="2">
    <location>
        <position position="272"/>
    </location>
</feature>
<feature type="modified residue" description="Phosphothreonine" evidence="16 19">
    <location>
        <position position="274"/>
    </location>
</feature>
<feature type="modified residue" description="N6-acetyllysine" evidence="18">
    <location>
        <position position="279"/>
    </location>
</feature>
<feature type="modified residue" description="Phosphoserine" evidence="13 15 16 19 20 21 22">
    <location>
        <position position="281"/>
    </location>
</feature>
<feature type="modified residue" description="Phosphoserine" evidence="16">
    <location>
        <position position="288"/>
    </location>
</feature>
<feature type="modified residue" description="Phosphoserine" evidence="16 19 21">
    <location>
        <position position="308"/>
    </location>
</feature>
<feature type="modified residue" description="Phosphoserine" evidence="14 15 16 19 20 21 22">
    <location>
        <position position="344"/>
    </location>
</feature>
<feature type="splice variant" id="VSP_057288" description="In isoform 2." evidence="11">
    <location>
        <begin position="1"/>
        <end position="157"/>
    </location>
</feature>
<feature type="sequence variant" id="VAR_034081" description="In dbSNP:rs11978404.">
    <original>H</original>
    <variation>L</variation>
    <location>
        <position position="223"/>
    </location>
</feature>
<feature type="mutagenesis site" description="Reduced interaction with ENAH and VASP." evidence="5">
    <original>F</original>
    <variation>A</variation>
    <location>
        <position position="71"/>
    </location>
</feature>
<feature type="mutagenesis site" description="Reduced interaction with ENAH and VASP." evidence="5">
    <original>F</original>
    <variation>A</variation>
    <location>
        <position position="93"/>
    </location>
</feature>
<feature type="mutagenesis site" description="Greatly reduced interaction with ENAH and VASP; when associated with A-71 or with A-71 and A-93." evidence="5">
    <original>F</original>
    <variation>A</variation>
    <location>
        <position position="104"/>
    </location>
</feature>
<feature type="mutagenesis site" description="No targeting to focal adhesions and reduced actin-rich structures; when associated with A-71; A-93 and A-104." evidence="5">
    <original>F</original>
    <variation>A</variation>
    <location>
        <position position="114"/>
    </location>
</feature>
<name>ZYX_HUMAN</name>
<organism>
    <name type="scientific">Homo sapiens</name>
    <name type="common">Human</name>
    <dbReference type="NCBI Taxonomy" id="9606"/>
    <lineage>
        <taxon>Eukaryota</taxon>
        <taxon>Metazoa</taxon>
        <taxon>Chordata</taxon>
        <taxon>Craniata</taxon>
        <taxon>Vertebrata</taxon>
        <taxon>Euteleostomi</taxon>
        <taxon>Mammalia</taxon>
        <taxon>Eutheria</taxon>
        <taxon>Euarchontoglires</taxon>
        <taxon>Primates</taxon>
        <taxon>Haplorrhini</taxon>
        <taxon>Catarrhini</taxon>
        <taxon>Hominidae</taxon>
        <taxon>Homo</taxon>
    </lineage>
</organism>
<proteinExistence type="evidence at protein level"/>
<comment type="function">
    <text evidence="1">Adhesion plaque protein. Binds alpha-actinin and the CRP protein. Important for targeting TES and ENA/VASP family members to focal adhesions and for the formation of actin-rich structures. May be a component of a signal transduction pathway that mediates adhesion-stimulated changes in gene expression (By similarity).</text>
</comment>
<comment type="subunit">
    <text evidence="5 7 8 9">Interacts with HPV type 6 protein E6. Does not interact significantly with E6 proteins from HPV types 11, 16, or 18. Interacts, via the Pro-rich regions, with the EVH1 domains of ENAH, EVL and VASP. Interacts with the first LIM domain of TES. Interacts with NEBL (isoform 2). Interacts with SYNPO2.</text>
</comment>
<comment type="subunit">
    <text evidence="6">(Microbial infection) Interacts with human papillomavirus type 6/HPV6 protein E6. Does not interact significantly with E6 proteins from HPV types 11, 16, or 18.</text>
</comment>
<comment type="interaction">
    <interactant intactId="EBI-444225">
        <id>Q15942</id>
    </interactant>
    <interactant intactId="EBI-12270182">
        <id>Q9NQ75-2</id>
        <label>CASS4</label>
    </interactant>
    <organismsDiffer>false</organismsDiffer>
    <experiments>4</experiments>
</comment>
<comment type="interaction">
    <interactant intactId="EBI-444225">
        <id>Q15942</id>
    </interactant>
    <interactant intactId="EBI-2834410">
        <id>Q8N8S7</id>
        <label>ENAH</label>
    </interactant>
    <organismsDiffer>false</organismsDiffer>
    <experiments>2</experiments>
</comment>
<comment type="interaction">
    <interactant intactId="EBI-444225">
        <id>Q15942</id>
    </interactant>
    <interactant intactId="EBI-6448852">
        <id>Q9UI08-2</id>
        <label>EVL</label>
    </interactant>
    <organismsDiffer>false</organismsDiffer>
    <experiments>5</experiments>
</comment>
<comment type="interaction">
    <interactant intactId="EBI-444225">
        <id>Q15942</id>
    </interactant>
    <interactant intactId="EBI-747481">
        <id>Q9NV31</id>
        <label>IMP3</label>
    </interactant>
    <organismsDiffer>false</organismsDiffer>
    <experiments>8</experiments>
</comment>
<comment type="interaction">
    <interactant intactId="EBI-444225">
        <id>Q15942</id>
    </interactant>
    <interactant intactId="EBI-2339312">
        <id>P28838</id>
        <label>LAP3</label>
    </interactant>
    <organismsDiffer>false</organismsDiffer>
    <experiments>3</experiments>
</comment>
<comment type="interaction">
    <interactant intactId="EBI-444225">
        <id>Q15942</id>
    </interactant>
    <interactant intactId="EBI-444209">
        <id>O95835</id>
        <label>LATS1</label>
    </interactant>
    <organismsDiffer>false</organismsDiffer>
    <experiments>10</experiments>
</comment>
<comment type="interaction">
    <interactant intactId="EBI-444225">
        <id>Q15942</id>
    </interactant>
    <interactant intactId="EBI-2513988">
        <id>O14910</id>
        <label>LIN7A</label>
    </interactant>
    <organismsDiffer>false</organismsDiffer>
    <experiments>3</experiments>
</comment>
<comment type="interaction">
    <interactant intactId="EBI-444225">
        <id>Q15942</id>
    </interactant>
    <interactant intactId="EBI-16430544">
        <id>A0A0S2Z4M0</id>
        <label>NME5</label>
    </interactant>
    <organismsDiffer>false</organismsDiffer>
    <experiments>4</experiments>
</comment>
<comment type="interaction">
    <interactant intactId="EBI-444225">
        <id>Q15942</id>
    </interactant>
    <interactant intactId="EBI-2624570">
        <id>P35372</id>
        <label>OPRM1</label>
    </interactant>
    <organismsDiffer>false</organismsDiffer>
    <experiments>2</experiments>
</comment>
<comment type="interaction">
    <interactant intactId="EBI-444225">
        <id>Q15942</id>
    </interactant>
    <interactant intactId="EBI-751267">
        <id>Q96HC4</id>
        <label>PDLIM5</label>
    </interactant>
    <organismsDiffer>false</organismsDiffer>
    <experiments>3</experiments>
</comment>
<comment type="interaction">
    <interactant intactId="EBI-444225">
        <id>Q15942</id>
    </interactant>
    <interactant intactId="EBI-745085">
        <id>Q96BD5</id>
        <label>PHF21A</label>
    </interactant>
    <organismsDiffer>false</organismsDiffer>
    <experiments>6</experiments>
</comment>
<comment type="interaction">
    <interactant intactId="EBI-444225">
        <id>Q15942</id>
    </interactant>
    <interactant intactId="EBI-2798044">
        <id>Q2TAL8</id>
        <label>QRICH1</label>
    </interactant>
    <organismsDiffer>false</organismsDiffer>
    <experiments>3</experiments>
</comment>
<comment type="interaction">
    <interactant intactId="EBI-444225">
        <id>Q15942</id>
    </interactant>
    <interactant intactId="EBI-743502">
        <id>Q8WWV3</id>
        <label>RTN4IP1</label>
    </interactant>
    <organismsDiffer>false</organismsDiffer>
    <experiments>5</experiments>
</comment>
<comment type="interaction">
    <interactant intactId="EBI-444225">
        <id>Q15942</id>
    </interactant>
    <interactant intactId="EBI-2557363">
        <id>Q9NNX1</id>
        <label>TUFT1</label>
    </interactant>
    <organismsDiffer>false</organismsDiffer>
    <experiments>3</experiments>
</comment>
<comment type="interaction">
    <interactant intactId="EBI-444225">
        <id>Q15942</id>
    </interactant>
    <interactant intactId="EBI-748201">
        <id>P50552</id>
        <label>VASP</label>
    </interactant>
    <organismsDiffer>false</organismsDiffer>
    <experiments>5</experiments>
</comment>
<comment type="interaction">
    <interactant intactId="EBI-444225">
        <id>Q15942</id>
    </interactant>
    <interactant intactId="EBI-1049952">
        <id>Q96KM6</id>
        <label>ZNF512B</label>
    </interactant>
    <organismsDiffer>false</organismsDiffer>
    <experiments>3</experiments>
</comment>
<comment type="interaction">
    <interactant intactId="EBI-444225">
        <id>Q15942</id>
    </interactant>
    <interactant intactId="EBI-10175746">
        <id>B2R9Y1</id>
    </interactant>
    <organismsDiffer>false</organismsDiffer>
    <experiments>3</experiments>
</comment>
<comment type="subcellular location">
    <subcellularLocation>
        <location>Cytoplasm</location>
    </subcellularLocation>
    <subcellularLocation>
        <location>Cytoplasm</location>
        <location>Cytoskeleton</location>
    </subcellularLocation>
    <subcellularLocation>
        <location>Nucleus</location>
    </subcellularLocation>
    <subcellularLocation>
        <location>Cell junction</location>
        <location>Focal adhesion</location>
    </subcellularLocation>
    <text>Associates with the actin cytoskeleton near the adhesion plaques. Enters the nucleus in the presence of HESX1.</text>
</comment>
<comment type="alternative products">
    <event type="alternative splicing"/>
    <isoform>
        <id>Q15942-1</id>
        <name>1</name>
        <sequence type="displayed"/>
    </isoform>
    <isoform>
        <id>Q15942-2</id>
        <name>2</name>
        <sequence type="described" ref="VSP_057288"/>
    </isoform>
</comment>
<comment type="similarity">
    <text evidence="12">Belongs to the zyxin/ajuba family.</text>
</comment>
<sequence length="572" mass="61277">MAAPRPSPAISVSVSAPAFYAPQKKFGPVVAPKPKVNPFRPGDSEPPPAPGAQRAQMGRVGEIPPPPPEDFPLPPPPLAGDGDDAEGALGGAFPPPPPPIEESFPPAPLEEEIFPSPPPPPEEEGGPEAPIPPPPQPREKVSSIDLEIDSLSSLLDDMTKNDPFKARVSSGYVPPPVATPFSSKSSTKPAAGGTAPLPPWKSPSSSQPLPQVPAPAQSQTQFHVQPQPQPKPQVQLHVQSQTQPVSLANTQPRGPPASSPAPAPKFSPVTPKFTPVASKFSPGAPGGSGSQPNQKLGHPEALSAGTGSPQPPSFTYAQQREKPRVQEKQHPVPPPAQNQNQVRSPGAPGPLTLKEVEELEQLTQQLMQDMEHPQRQNVAVNELCGRCHQPLARAQPAVRALGQLFHIACFTCHQCAQQLQGQQFYSLEGAPYCEGCYTDTLEKCNTCGEPITDRMLRATGKAYHPHCFTCVVCARPLEGTSFIVDQANRPHCVPDYHKQYAPRCSVCSEPIMPEPGRDETVRVVALDKNFHMKCYKCEDCGKPLSIEADDNGCFPLDGHVLCRKCHTARAQT</sequence>
<evidence type="ECO:0000250" key="1"/>
<evidence type="ECO:0000250" key="2">
    <source>
        <dbReference type="UniProtKB" id="Q62523"/>
    </source>
</evidence>
<evidence type="ECO:0000255" key="3">
    <source>
        <dbReference type="PROSITE-ProRule" id="PRU00125"/>
    </source>
</evidence>
<evidence type="ECO:0000256" key="4">
    <source>
        <dbReference type="SAM" id="MobiDB-lite"/>
    </source>
</evidence>
<evidence type="ECO:0000269" key="5">
    <source>
    </source>
</evidence>
<evidence type="ECO:0000269" key="6">
    <source>
    </source>
</evidence>
<evidence type="ECO:0000269" key="7">
    <source>
    </source>
</evidence>
<evidence type="ECO:0000269" key="8">
    <source>
    </source>
</evidence>
<evidence type="ECO:0000269" key="9">
    <source>
    </source>
</evidence>
<evidence type="ECO:0000269" key="10">
    <source ref="9"/>
</evidence>
<evidence type="ECO:0000303" key="11">
    <source>
    </source>
</evidence>
<evidence type="ECO:0000305" key="12"/>
<evidence type="ECO:0007744" key="13">
    <source>
    </source>
</evidence>
<evidence type="ECO:0007744" key="14">
    <source>
    </source>
</evidence>
<evidence type="ECO:0007744" key="15">
    <source>
    </source>
</evidence>
<evidence type="ECO:0007744" key="16">
    <source>
    </source>
</evidence>
<evidence type="ECO:0007744" key="17">
    <source>
    </source>
</evidence>
<evidence type="ECO:0007744" key="18">
    <source>
    </source>
</evidence>
<evidence type="ECO:0007744" key="19">
    <source>
    </source>
</evidence>
<evidence type="ECO:0007744" key="20">
    <source>
    </source>
</evidence>
<evidence type="ECO:0007744" key="21">
    <source>
    </source>
</evidence>
<evidence type="ECO:0007744" key="22">
    <source>
    </source>
</evidence>
<gene>
    <name type="primary">ZYX</name>
</gene>
<dbReference type="EMBL" id="X94991">
    <property type="protein sequence ID" value="CAA64447.1"/>
    <property type="molecule type" value="mRNA"/>
</dbReference>
<dbReference type="EMBL" id="X95735">
    <property type="protein sequence ID" value="CAA65050.1"/>
    <property type="molecule type" value="mRNA"/>
</dbReference>
<dbReference type="EMBL" id="AK299005">
    <property type="protein sequence ID" value="BAG61089.1"/>
    <property type="molecule type" value="mRNA"/>
</dbReference>
<dbReference type="EMBL" id="AK316227">
    <property type="protein sequence ID" value="BAH14598.1"/>
    <property type="molecule type" value="mRNA"/>
</dbReference>
<dbReference type="EMBL" id="CR457431">
    <property type="protein sequence ID" value="CAG33712.1"/>
    <property type="molecule type" value="mRNA"/>
</dbReference>
<dbReference type="EMBL" id="AC092214">
    <property type="protein sequence ID" value="AAS07459.1"/>
    <property type="molecule type" value="Genomic_DNA"/>
</dbReference>
<dbReference type="EMBL" id="CH236959">
    <property type="protein sequence ID" value="EAL23788.1"/>
    <property type="molecule type" value="Genomic_DNA"/>
</dbReference>
<dbReference type="EMBL" id="CH471198">
    <property type="protein sequence ID" value="EAW51848.1"/>
    <property type="molecule type" value="Genomic_DNA"/>
</dbReference>
<dbReference type="EMBL" id="BC008743">
    <property type="protein sequence ID" value="AAH08743.1"/>
    <property type="molecule type" value="mRNA"/>
</dbReference>
<dbReference type="EMBL" id="BC009360">
    <property type="protein sequence ID" value="AAH09360.1"/>
    <property type="molecule type" value="mRNA"/>
</dbReference>
<dbReference type="EMBL" id="BC010031">
    <property type="protein sequence ID" value="AAH10031.1"/>
    <property type="molecule type" value="mRNA"/>
</dbReference>
<dbReference type="CCDS" id="CCDS5883.1">
    <molecule id="Q15942-1"/>
</dbReference>
<dbReference type="PIR" id="G02845">
    <property type="entry name" value="G02845"/>
</dbReference>
<dbReference type="RefSeq" id="NP_001010972.1">
    <molecule id="Q15942-1"/>
    <property type="nucleotide sequence ID" value="NM_001010972.2"/>
</dbReference>
<dbReference type="RefSeq" id="NP_003452.1">
    <molecule id="Q15942-1"/>
    <property type="nucleotide sequence ID" value="NM_003461.5"/>
</dbReference>
<dbReference type="SMR" id="Q15942"/>
<dbReference type="BioGRID" id="113569">
    <property type="interactions" value="327"/>
</dbReference>
<dbReference type="CORUM" id="Q15942"/>
<dbReference type="FunCoup" id="Q15942">
    <property type="interactions" value="1016"/>
</dbReference>
<dbReference type="IntAct" id="Q15942">
    <property type="interactions" value="115"/>
</dbReference>
<dbReference type="MINT" id="Q15942"/>
<dbReference type="STRING" id="9606.ENSP00000324422"/>
<dbReference type="ChEMBL" id="CHEMBL4295832"/>
<dbReference type="DrugBank" id="DB11638">
    <property type="generic name" value="Artenimol"/>
</dbReference>
<dbReference type="GlyCosmos" id="Q15942">
    <property type="glycosylation" value="18 sites, 3 glycans"/>
</dbReference>
<dbReference type="GlyGen" id="Q15942">
    <property type="glycosylation" value="18 sites, 3 O-linked glycans (18 sites)"/>
</dbReference>
<dbReference type="iPTMnet" id="Q15942"/>
<dbReference type="MetOSite" id="Q15942"/>
<dbReference type="PhosphoSitePlus" id="Q15942"/>
<dbReference type="SwissPalm" id="Q15942"/>
<dbReference type="BioMuta" id="ZYX"/>
<dbReference type="DMDM" id="2497677"/>
<dbReference type="OGP" id="Q15942"/>
<dbReference type="CPTAC" id="CPTAC-1022"/>
<dbReference type="CPTAC" id="CPTAC-452"/>
<dbReference type="CPTAC" id="CPTAC-453"/>
<dbReference type="jPOST" id="Q15942"/>
<dbReference type="MassIVE" id="Q15942"/>
<dbReference type="PaxDb" id="9606-ENSP00000324422"/>
<dbReference type="PeptideAtlas" id="Q15942"/>
<dbReference type="ProteomicsDB" id="4911"/>
<dbReference type="ProteomicsDB" id="60823">
    <molecule id="Q15942-1"/>
</dbReference>
<dbReference type="Pumba" id="Q15942"/>
<dbReference type="Antibodypedia" id="1394">
    <property type="antibodies" value="389 antibodies from 42 providers"/>
</dbReference>
<dbReference type="DNASU" id="7791"/>
<dbReference type="Ensembl" id="ENST00000322764.10">
    <molecule id="Q15942-1"/>
    <property type="protein sequence ID" value="ENSP00000324422.5"/>
    <property type="gene ID" value="ENSG00000159840.16"/>
</dbReference>
<dbReference type="Ensembl" id="ENST00000392910.6">
    <molecule id="Q15942-2"/>
    <property type="protein sequence ID" value="ENSP00000376642.2"/>
    <property type="gene ID" value="ENSG00000159840.16"/>
</dbReference>
<dbReference type="Ensembl" id="ENST00000645637.1">
    <molecule id="Q15942-2"/>
    <property type="protein sequence ID" value="ENSP00000495629.1"/>
    <property type="gene ID" value="ENSG00000285443.2"/>
</dbReference>
<dbReference type="Ensembl" id="ENST00000646695.2">
    <molecule id="Q15942-1"/>
    <property type="protein sequence ID" value="ENSP00000494798.1"/>
    <property type="gene ID" value="ENSG00000285443.2"/>
</dbReference>
<dbReference type="GeneID" id="7791"/>
<dbReference type="KEGG" id="hsa:7791"/>
<dbReference type="MANE-Select" id="ENST00000322764.10">
    <property type="protein sequence ID" value="ENSP00000324422.5"/>
    <property type="RefSeq nucleotide sequence ID" value="NM_003461.5"/>
    <property type="RefSeq protein sequence ID" value="NP_003452.1"/>
</dbReference>
<dbReference type="UCSC" id="uc003wcx.5">
    <molecule id="Q15942-1"/>
    <property type="organism name" value="human"/>
</dbReference>
<dbReference type="AGR" id="HGNC:13200"/>
<dbReference type="CTD" id="7791"/>
<dbReference type="DisGeNET" id="7791"/>
<dbReference type="GeneCards" id="ZYX"/>
<dbReference type="HGNC" id="HGNC:13200">
    <property type="gene designation" value="ZYX"/>
</dbReference>
<dbReference type="HPA" id="ENSG00000159840">
    <property type="expression patterns" value="Low tissue specificity"/>
</dbReference>
<dbReference type="MIM" id="602002">
    <property type="type" value="gene"/>
</dbReference>
<dbReference type="neXtProt" id="NX_Q15942"/>
<dbReference type="OpenTargets" id="ENSG00000159840"/>
<dbReference type="PharmGKB" id="PA37765"/>
<dbReference type="VEuPathDB" id="HostDB:ENSG00000159840"/>
<dbReference type="eggNOG" id="KOG1701">
    <property type="taxonomic scope" value="Eukaryota"/>
</dbReference>
<dbReference type="GeneTree" id="ENSGT00940000154273"/>
<dbReference type="HOGENOM" id="CLU_001357_10_2_1"/>
<dbReference type="InParanoid" id="Q15942"/>
<dbReference type="OMA" id="YAPKCSV"/>
<dbReference type="OrthoDB" id="25414at2759"/>
<dbReference type="PAN-GO" id="Q15942">
    <property type="GO annotations" value="5 GO annotations based on evolutionary models"/>
</dbReference>
<dbReference type="PhylomeDB" id="Q15942"/>
<dbReference type="TreeFam" id="TF320310"/>
<dbReference type="PathwayCommons" id="Q15942"/>
<dbReference type="SignaLink" id="Q15942"/>
<dbReference type="SIGNOR" id="Q15942"/>
<dbReference type="BioGRID-ORCS" id="7791">
    <property type="hits" value="24 hits in 1161 CRISPR screens"/>
</dbReference>
<dbReference type="ChiTaRS" id="ZYX">
    <property type="organism name" value="human"/>
</dbReference>
<dbReference type="GeneWiki" id="Zyxin"/>
<dbReference type="GenomeRNAi" id="7791"/>
<dbReference type="Pharos" id="Q15942">
    <property type="development level" value="Tbio"/>
</dbReference>
<dbReference type="PRO" id="PR:Q15942"/>
<dbReference type="Proteomes" id="UP000005640">
    <property type="component" value="Chromosome 7"/>
</dbReference>
<dbReference type="RNAct" id="Q15942">
    <property type="molecule type" value="protein"/>
</dbReference>
<dbReference type="Bgee" id="ENSG00000159840">
    <property type="expression patterns" value="Expressed in body of uterus and 98 other cell types or tissues"/>
</dbReference>
<dbReference type="ExpressionAtlas" id="Q15942">
    <property type="expression patterns" value="baseline and differential"/>
</dbReference>
<dbReference type="GO" id="GO:0015629">
    <property type="term" value="C:actin cytoskeleton"/>
    <property type="evidence" value="ECO:0000314"/>
    <property type="project" value="HPA"/>
</dbReference>
<dbReference type="GO" id="GO:0005912">
    <property type="term" value="C:adherens junction"/>
    <property type="evidence" value="ECO:0000314"/>
    <property type="project" value="MGI"/>
</dbReference>
<dbReference type="GO" id="GO:0005737">
    <property type="term" value="C:cytoplasm"/>
    <property type="evidence" value="ECO:0000318"/>
    <property type="project" value="GO_Central"/>
</dbReference>
<dbReference type="GO" id="GO:0005829">
    <property type="term" value="C:cytosol"/>
    <property type="evidence" value="ECO:0000314"/>
    <property type="project" value="HPA"/>
</dbReference>
<dbReference type="GO" id="GO:0005925">
    <property type="term" value="C:focal adhesion"/>
    <property type="evidence" value="ECO:0000314"/>
    <property type="project" value="HPA"/>
</dbReference>
<dbReference type="GO" id="GO:0005634">
    <property type="term" value="C:nucleus"/>
    <property type="evidence" value="ECO:0000314"/>
    <property type="project" value="UniProtKB"/>
</dbReference>
<dbReference type="GO" id="GO:0045335">
    <property type="term" value="C:phagocytic vesicle"/>
    <property type="evidence" value="ECO:0007669"/>
    <property type="project" value="Ensembl"/>
</dbReference>
<dbReference type="GO" id="GO:0005886">
    <property type="term" value="C:plasma membrane"/>
    <property type="evidence" value="ECO:0000314"/>
    <property type="project" value="HPA"/>
</dbReference>
<dbReference type="GO" id="GO:0001725">
    <property type="term" value="C:stress fiber"/>
    <property type="evidence" value="ECO:0000314"/>
    <property type="project" value="UniProtKB"/>
</dbReference>
<dbReference type="GO" id="GO:0046872">
    <property type="term" value="F:metal ion binding"/>
    <property type="evidence" value="ECO:0007669"/>
    <property type="project" value="UniProtKB-KW"/>
</dbReference>
<dbReference type="GO" id="GO:0003723">
    <property type="term" value="F:RNA binding"/>
    <property type="evidence" value="ECO:0007005"/>
    <property type="project" value="UniProtKB"/>
</dbReference>
<dbReference type="GO" id="GO:0007267">
    <property type="term" value="P:cell-cell signaling"/>
    <property type="evidence" value="ECO:0000304"/>
    <property type="project" value="ProtInc"/>
</dbReference>
<dbReference type="GO" id="GO:0007160">
    <property type="term" value="P:cell-matrix adhesion"/>
    <property type="evidence" value="ECO:0000305"/>
    <property type="project" value="UniProtKB"/>
</dbReference>
<dbReference type="GO" id="GO:0071346">
    <property type="term" value="P:cellular response to type II interferon"/>
    <property type="evidence" value="ECO:0007669"/>
    <property type="project" value="Ensembl"/>
</dbReference>
<dbReference type="GO" id="GO:0007229">
    <property type="term" value="P:integrin-mediated signaling pathway"/>
    <property type="evidence" value="ECO:0000315"/>
    <property type="project" value="UniProtKB"/>
</dbReference>
<dbReference type="GO" id="GO:0043149">
    <property type="term" value="P:stress fiber assembly"/>
    <property type="evidence" value="ECO:0000315"/>
    <property type="project" value="UniProtKB"/>
</dbReference>
<dbReference type="GO" id="GO:0007179">
    <property type="term" value="P:transforming growth factor beta receptor signaling pathway"/>
    <property type="evidence" value="ECO:0000315"/>
    <property type="project" value="UniProtKB"/>
</dbReference>
<dbReference type="CDD" id="cd09349">
    <property type="entry name" value="LIM1_Zyxin"/>
    <property type="match status" value="1"/>
</dbReference>
<dbReference type="CDD" id="cd09435">
    <property type="entry name" value="LIM3_Zyxin"/>
    <property type="match status" value="1"/>
</dbReference>
<dbReference type="FunFam" id="2.10.110.10:FF:000027">
    <property type="entry name" value="lipoma-preferred partner isoform X1"/>
    <property type="match status" value="1"/>
</dbReference>
<dbReference type="FunFam" id="2.10.110.10:FF:000057">
    <property type="entry name" value="Zyxin"/>
    <property type="match status" value="1"/>
</dbReference>
<dbReference type="FunFam" id="2.10.110.10:FF:000076">
    <property type="entry name" value="Zyxin"/>
    <property type="match status" value="1"/>
</dbReference>
<dbReference type="Gene3D" id="2.10.110.10">
    <property type="entry name" value="Cysteine Rich Protein"/>
    <property type="match status" value="3"/>
</dbReference>
<dbReference type="InterPro" id="IPR001781">
    <property type="entry name" value="Znf_LIM"/>
</dbReference>
<dbReference type="PANTHER" id="PTHR24212:SF1">
    <property type="entry name" value="ZYXIN"/>
    <property type="match status" value="1"/>
</dbReference>
<dbReference type="PANTHER" id="PTHR24212">
    <property type="entry name" value="ZYXIN/TRIP6"/>
    <property type="match status" value="1"/>
</dbReference>
<dbReference type="Pfam" id="PF00412">
    <property type="entry name" value="LIM"/>
    <property type="match status" value="3"/>
</dbReference>
<dbReference type="SMART" id="SM00132">
    <property type="entry name" value="LIM"/>
    <property type="match status" value="3"/>
</dbReference>
<dbReference type="SUPFAM" id="SSF57716">
    <property type="entry name" value="Glucocorticoid receptor-like (DNA-binding domain)"/>
    <property type="match status" value="2"/>
</dbReference>
<dbReference type="PROSITE" id="PS00478">
    <property type="entry name" value="LIM_DOMAIN_1"/>
    <property type="match status" value="2"/>
</dbReference>
<dbReference type="PROSITE" id="PS50023">
    <property type="entry name" value="LIM_DOMAIN_2"/>
    <property type="match status" value="3"/>
</dbReference>
<accession>Q15942</accession>
<accession>A4D2G6</accession>
<accession>B4DQX7</accession>
<accession>Q6I9S4</accession>
<keyword id="KW-0007">Acetylation</keyword>
<keyword id="KW-0025">Alternative splicing</keyword>
<keyword id="KW-0130">Cell adhesion</keyword>
<keyword id="KW-0965">Cell junction</keyword>
<keyword id="KW-0963">Cytoplasm</keyword>
<keyword id="KW-0206">Cytoskeleton</keyword>
<keyword id="KW-0903">Direct protein sequencing</keyword>
<keyword id="KW-0945">Host-virus interaction</keyword>
<keyword id="KW-0440">LIM domain</keyword>
<keyword id="KW-0479">Metal-binding</keyword>
<keyword id="KW-0488">Methylation</keyword>
<keyword id="KW-0539">Nucleus</keyword>
<keyword id="KW-0597">Phosphoprotein</keyword>
<keyword id="KW-1267">Proteomics identification</keyword>
<keyword id="KW-1185">Reference proteome</keyword>
<keyword id="KW-0677">Repeat</keyword>
<keyword id="KW-0862">Zinc</keyword>
<protein>
    <recommendedName>
        <fullName>Zyxin</fullName>
    </recommendedName>
    <alternativeName>
        <fullName>Zyxin-2</fullName>
    </alternativeName>
</protein>